<dbReference type="EMBL" id="D64071">
    <property type="protein sequence ID" value="BAA10947.1"/>
    <property type="molecule type" value="Genomic_DNA"/>
</dbReference>
<dbReference type="SMR" id="P94799"/>
<dbReference type="STRING" id="714.ACT75_03760"/>
<dbReference type="eggNOG" id="COG0087">
    <property type="taxonomic scope" value="Bacteria"/>
</dbReference>
<dbReference type="GO" id="GO:0022625">
    <property type="term" value="C:cytosolic large ribosomal subunit"/>
    <property type="evidence" value="ECO:0007669"/>
    <property type="project" value="TreeGrafter"/>
</dbReference>
<dbReference type="GO" id="GO:0019843">
    <property type="term" value="F:rRNA binding"/>
    <property type="evidence" value="ECO:0007669"/>
    <property type="project" value="UniProtKB-KW"/>
</dbReference>
<dbReference type="GO" id="GO:0003735">
    <property type="term" value="F:structural constituent of ribosome"/>
    <property type="evidence" value="ECO:0007669"/>
    <property type="project" value="InterPro"/>
</dbReference>
<dbReference type="GO" id="GO:0006412">
    <property type="term" value="P:translation"/>
    <property type="evidence" value="ECO:0007669"/>
    <property type="project" value="InterPro"/>
</dbReference>
<dbReference type="FunFam" id="2.40.30.10:FF:000004">
    <property type="entry name" value="50S ribosomal protein L3"/>
    <property type="match status" value="1"/>
</dbReference>
<dbReference type="Gene3D" id="2.40.30.10">
    <property type="entry name" value="Translation factors"/>
    <property type="match status" value="1"/>
</dbReference>
<dbReference type="InterPro" id="IPR000597">
    <property type="entry name" value="Ribosomal_uL3"/>
</dbReference>
<dbReference type="InterPro" id="IPR019927">
    <property type="entry name" value="Ribosomal_uL3_bac/org-type"/>
</dbReference>
<dbReference type="InterPro" id="IPR019926">
    <property type="entry name" value="Ribosomal_uL3_CS"/>
</dbReference>
<dbReference type="InterPro" id="IPR009000">
    <property type="entry name" value="Transl_B-barrel_sf"/>
</dbReference>
<dbReference type="NCBIfam" id="TIGR03625">
    <property type="entry name" value="L3_bact"/>
    <property type="match status" value="1"/>
</dbReference>
<dbReference type="PANTHER" id="PTHR11229">
    <property type="entry name" value="50S RIBOSOMAL PROTEIN L3"/>
    <property type="match status" value="1"/>
</dbReference>
<dbReference type="PANTHER" id="PTHR11229:SF16">
    <property type="entry name" value="LARGE RIBOSOMAL SUBUNIT PROTEIN UL3C"/>
    <property type="match status" value="1"/>
</dbReference>
<dbReference type="Pfam" id="PF00297">
    <property type="entry name" value="Ribosomal_L3"/>
    <property type="match status" value="1"/>
</dbReference>
<dbReference type="SUPFAM" id="SSF50447">
    <property type="entry name" value="Translation proteins"/>
    <property type="match status" value="1"/>
</dbReference>
<dbReference type="PROSITE" id="PS00474">
    <property type="entry name" value="RIBOSOMAL_L3"/>
    <property type="match status" value="1"/>
</dbReference>
<sequence>EFTLGQEINVDIFADVKKVDVTGTSKGKGFQGGVKRWNFRTQDATHGNSLSHRVLGSIGQNQTPGRVFKGKKMAGHLGNERVTVQSLEVVRVDAERKLLLVKGAVPGATGSDVIVKPAVKA</sequence>
<evidence type="ECO:0000250" key="1"/>
<evidence type="ECO:0000305" key="2"/>
<name>RL3_AGGAC</name>
<protein>
    <recommendedName>
        <fullName evidence="2">Large ribosomal subunit protein uL3</fullName>
    </recommendedName>
    <alternativeName>
        <fullName>50S ribosomal protein L3</fullName>
    </alternativeName>
</protein>
<gene>
    <name type="primary">rplC</name>
</gene>
<feature type="chain" id="PRO_0000077057" description="Large ribosomal subunit protein uL3">
    <location>
        <begin position="1" status="less than"/>
        <end position="121"/>
    </location>
</feature>
<feature type="modified residue" description="N5-methylglutamine" evidence="1">
    <location>
        <position position="62"/>
    </location>
</feature>
<feature type="non-terminal residue">
    <location>
        <position position="1"/>
    </location>
</feature>
<organism>
    <name type="scientific">Aggregatibacter actinomycetemcomitans</name>
    <name type="common">Actinobacillus actinomycetemcomitans</name>
    <name type="synonym">Haemophilus actinomycetemcomitans</name>
    <dbReference type="NCBI Taxonomy" id="714"/>
    <lineage>
        <taxon>Bacteria</taxon>
        <taxon>Pseudomonadati</taxon>
        <taxon>Pseudomonadota</taxon>
        <taxon>Gammaproteobacteria</taxon>
        <taxon>Pasteurellales</taxon>
        <taxon>Pasteurellaceae</taxon>
        <taxon>Aggregatibacter</taxon>
    </lineage>
</organism>
<keyword id="KW-0488">Methylation</keyword>
<keyword id="KW-0687">Ribonucleoprotein</keyword>
<keyword id="KW-0689">Ribosomal protein</keyword>
<keyword id="KW-0694">RNA-binding</keyword>
<keyword id="KW-0699">rRNA-binding</keyword>
<reference key="1">
    <citation type="journal article" date="1996" name="Microbiology">
        <title>Molecular analysis of a new insertion sequence from Actinobacillus (Haemophilus) actinomycetemcomitans FDC Y4.</title>
        <authorList>
            <person name="Hayashida H."/>
            <person name="Hotokezaka H."/>
            <person name="Ohara N."/>
            <person name="Kimura M."/>
            <person name="Takagi O."/>
            <person name="Yamada T."/>
        </authorList>
    </citation>
    <scope>NUCLEOTIDE SEQUENCE [GENOMIC DNA]</scope>
    <source>
        <strain>ATCC 43718 / FDC Y4 / Serotype b</strain>
    </source>
</reference>
<comment type="function">
    <text evidence="1">One of the primary rRNA binding proteins, it binds directly near the 3'-end of the 23S rRNA, where it nucleates assembly of the 50S subunit.</text>
</comment>
<comment type="subunit">
    <text evidence="1">Part of the 50S ribosomal subunit. Forms a cluster with proteins L14 and L19 (By similarity).</text>
</comment>
<comment type="PTM">
    <text evidence="1">Methylated by PrmB.</text>
</comment>
<comment type="similarity">
    <text evidence="2">Belongs to the universal ribosomal protein uL3 family.</text>
</comment>
<accession>P94799</accession>
<proteinExistence type="inferred from homology"/>